<comment type="subunit">
    <text evidence="1">Binds annexin.</text>
</comment>
<comment type="caution">
    <text evidence="1">The order of the peptides shown is unknown.</text>
</comment>
<proteinExistence type="evidence at protein level"/>
<feature type="chain" id="PRO_0000064427" description="87 kDa annexin-binding protein">
    <location>
        <begin position="1" status="less than"/>
        <end position="112" status="greater than"/>
    </location>
</feature>
<feature type="non-consecutive residues" evidence="2">
    <location>
        <begin position="9"/>
        <end position="10"/>
    </location>
</feature>
<feature type="non-consecutive residues" evidence="2">
    <location>
        <begin position="17"/>
        <end position="18"/>
    </location>
</feature>
<feature type="non-consecutive residues" evidence="2">
    <location>
        <begin position="33"/>
        <end position="34"/>
    </location>
</feature>
<feature type="non-consecutive residues" evidence="2">
    <location>
        <begin position="47"/>
        <end position="48"/>
    </location>
</feature>
<feature type="non-consecutive residues" evidence="2">
    <location>
        <begin position="59"/>
        <end position="60"/>
    </location>
</feature>
<feature type="non-consecutive residues" evidence="2">
    <location>
        <begin position="74"/>
        <end position="75"/>
    </location>
</feature>
<feature type="non-consecutive residues" evidence="2">
    <location>
        <begin position="86"/>
        <end position="87"/>
    </location>
</feature>
<feature type="non-consecutive residues" evidence="2">
    <location>
        <begin position="99"/>
        <end position="100"/>
    </location>
</feature>
<feature type="non-terminal residue" evidence="2">
    <location>
        <position position="1"/>
    </location>
</feature>
<feature type="non-terminal residue" evidence="2">
    <location>
        <position position="112"/>
    </location>
</feature>
<name>ABP1_PHYPO</name>
<keyword id="KW-0903">Direct protein sequencing</keyword>
<accession>P84179</accession>
<sequence>LXAINDMDVAXNLMKVLNAVMRDPSLYRMXSLEAAMLNSFYATSYKPTFIDDXIMEQMMAFIDDDPLEQMRAERVVMYXTQPFIDAVVMYHNQLFIDAKSXLDSTRSYXXGG</sequence>
<reference key="1">
    <citation type="journal article" date="2005" name="Cell Struct. Funct.">
        <title>Class-specific binding of two aminoacyl-tRNA synthetases to annexin, a Ca2+- and phospholipid-binding protein.</title>
        <authorList>
            <person name="Shirakawa T."/>
            <person name="Nakamura A."/>
            <person name="Kohama K."/>
            <person name="Hirakata M."/>
            <person name="Ogihara S."/>
        </authorList>
    </citation>
    <scope>PROTEIN SEQUENCE</scope>
    <scope>SUBUNIT</scope>
</reference>
<evidence type="ECO:0000269" key="1">
    <source>
    </source>
</evidence>
<evidence type="ECO:0000303" key="2">
    <source>
    </source>
</evidence>
<organism>
    <name type="scientific">Physarum polycephalum</name>
    <name type="common">Slime mold</name>
    <dbReference type="NCBI Taxonomy" id="5791"/>
    <lineage>
        <taxon>Eukaryota</taxon>
        <taxon>Amoebozoa</taxon>
        <taxon>Evosea</taxon>
        <taxon>Eumycetozoa</taxon>
        <taxon>Myxogastria</taxon>
        <taxon>Myxogastromycetidae</taxon>
        <taxon>Physariida</taxon>
        <taxon>Physaraceae</taxon>
        <taxon>Physarum</taxon>
    </lineage>
</organism>
<protein>
    <recommendedName>
        <fullName>87 kDa annexin-binding protein</fullName>
    </recommendedName>
</protein>